<evidence type="ECO:0000250" key="1"/>
<evidence type="ECO:0000255" key="2"/>
<evidence type="ECO:0000255" key="3">
    <source>
        <dbReference type="PROSITE-ProRule" id="PRU00376"/>
    </source>
</evidence>
<evidence type="ECO:0000256" key="4">
    <source>
        <dbReference type="SAM" id="MobiDB-lite"/>
    </source>
</evidence>
<evidence type="ECO:0000305" key="5"/>
<proteinExistence type="inferred from homology"/>
<name>AF9_GIBZE</name>
<reference key="1">
    <citation type="journal article" date="2007" name="Science">
        <title>The Fusarium graminearum genome reveals a link between localized polymorphism and pathogen specialization.</title>
        <authorList>
            <person name="Cuomo C.A."/>
            <person name="Gueldener U."/>
            <person name="Xu J.-R."/>
            <person name="Trail F."/>
            <person name="Turgeon B.G."/>
            <person name="Di Pietro A."/>
            <person name="Walton J.D."/>
            <person name="Ma L.-J."/>
            <person name="Baker S.E."/>
            <person name="Rep M."/>
            <person name="Adam G."/>
            <person name="Antoniw J."/>
            <person name="Baldwin T."/>
            <person name="Calvo S.E."/>
            <person name="Chang Y.-L."/>
            <person name="DeCaprio D."/>
            <person name="Gale L.R."/>
            <person name="Gnerre S."/>
            <person name="Goswami R.S."/>
            <person name="Hammond-Kosack K."/>
            <person name="Harris L.J."/>
            <person name="Hilburn K."/>
            <person name="Kennell J.C."/>
            <person name="Kroken S."/>
            <person name="Magnuson J.K."/>
            <person name="Mannhaupt G."/>
            <person name="Mauceli E.W."/>
            <person name="Mewes H.-W."/>
            <person name="Mitterbauer R."/>
            <person name="Muehlbauer G."/>
            <person name="Muensterkoetter M."/>
            <person name="Nelson D."/>
            <person name="O'Donnell K."/>
            <person name="Ouellet T."/>
            <person name="Qi W."/>
            <person name="Quesneville H."/>
            <person name="Roncero M.I.G."/>
            <person name="Seong K.-Y."/>
            <person name="Tetko I.V."/>
            <person name="Urban M."/>
            <person name="Waalwijk C."/>
            <person name="Ward T.J."/>
            <person name="Yao J."/>
            <person name="Birren B.W."/>
            <person name="Kistler H.C."/>
        </authorList>
    </citation>
    <scope>NUCLEOTIDE SEQUENCE [LARGE SCALE GENOMIC DNA]</scope>
    <source>
        <strain>ATCC MYA-4620 / CBS 123657 / FGSC 9075 / NRRL 31084 / PH-1</strain>
    </source>
</reference>
<reference key="2">
    <citation type="journal article" date="2010" name="Nature">
        <title>Comparative genomics reveals mobile pathogenicity chromosomes in Fusarium.</title>
        <authorList>
            <person name="Ma L.-J."/>
            <person name="van der Does H.C."/>
            <person name="Borkovich K.A."/>
            <person name="Coleman J.J."/>
            <person name="Daboussi M.-J."/>
            <person name="Di Pietro A."/>
            <person name="Dufresne M."/>
            <person name="Freitag M."/>
            <person name="Grabherr M."/>
            <person name="Henrissat B."/>
            <person name="Houterman P.M."/>
            <person name="Kang S."/>
            <person name="Shim W.-B."/>
            <person name="Woloshuk C."/>
            <person name="Xie X."/>
            <person name="Xu J.-R."/>
            <person name="Antoniw J."/>
            <person name="Baker S.E."/>
            <person name="Bluhm B.H."/>
            <person name="Breakspear A."/>
            <person name="Brown D.W."/>
            <person name="Butchko R.A.E."/>
            <person name="Chapman S."/>
            <person name="Coulson R."/>
            <person name="Coutinho P.M."/>
            <person name="Danchin E.G.J."/>
            <person name="Diener A."/>
            <person name="Gale L.R."/>
            <person name="Gardiner D.M."/>
            <person name="Goff S."/>
            <person name="Hammond-Kosack K.E."/>
            <person name="Hilburn K."/>
            <person name="Hua-Van A."/>
            <person name="Jonkers W."/>
            <person name="Kazan K."/>
            <person name="Kodira C.D."/>
            <person name="Koehrsen M."/>
            <person name="Kumar L."/>
            <person name="Lee Y.-H."/>
            <person name="Li L."/>
            <person name="Manners J.M."/>
            <person name="Miranda-Saavedra D."/>
            <person name="Mukherjee M."/>
            <person name="Park G."/>
            <person name="Park J."/>
            <person name="Park S.-Y."/>
            <person name="Proctor R.H."/>
            <person name="Regev A."/>
            <person name="Ruiz-Roldan M.C."/>
            <person name="Sain D."/>
            <person name="Sakthikumar S."/>
            <person name="Sykes S."/>
            <person name="Schwartz D.C."/>
            <person name="Turgeon B.G."/>
            <person name="Wapinski I."/>
            <person name="Yoder O."/>
            <person name="Young S."/>
            <person name="Zeng Q."/>
            <person name="Zhou S."/>
            <person name="Galagan J."/>
            <person name="Cuomo C.A."/>
            <person name="Kistler H.C."/>
            <person name="Rep M."/>
        </authorList>
    </citation>
    <scope>GENOME REANNOTATION</scope>
    <source>
        <strain>ATCC MYA-4620 / CBS 123657 / FGSC 9075 / NRRL 31084 / PH-1</strain>
    </source>
</reference>
<reference key="3">
    <citation type="journal article" date="2015" name="BMC Genomics">
        <title>The completed genome sequence of the pathogenic ascomycete fungus Fusarium graminearum.</title>
        <authorList>
            <person name="King R."/>
            <person name="Urban M."/>
            <person name="Hammond-Kosack M.C.U."/>
            <person name="Hassani-Pak K."/>
            <person name="Hammond-Kosack K.E."/>
        </authorList>
    </citation>
    <scope>NUCLEOTIDE SEQUENCE [LARGE SCALE GENOMIC DNA]</scope>
    <source>
        <strain>ATCC MYA-4620 / CBS 123657 / FGSC 9075 / NRRL 31084 / PH-1</strain>
    </source>
</reference>
<gene>
    <name type="primary">YAF9</name>
    <name type="ORF">FGRRES_06737</name>
    <name type="ORF">FGSG_06737</name>
</gene>
<keyword id="KW-0010">Activator</keyword>
<keyword id="KW-0156">Chromatin regulator</keyword>
<keyword id="KW-0175">Coiled coil</keyword>
<keyword id="KW-0963">Cytoplasm</keyword>
<keyword id="KW-0227">DNA damage</keyword>
<keyword id="KW-0234">DNA repair</keyword>
<keyword id="KW-0539">Nucleus</keyword>
<keyword id="KW-1185">Reference proteome</keyword>
<keyword id="KW-0804">Transcription</keyword>
<keyword id="KW-0805">Transcription regulation</keyword>
<organism>
    <name type="scientific">Gibberella zeae (strain ATCC MYA-4620 / CBS 123657 / FGSC 9075 / NRRL 31084 / PH-1)</name>
    <name type="common">Wheat head blight fungus</name>
    <name type="synonym">Fusarium graminearum</name>
    <dbReference type="NCBI Taxonomy" id="229533"/>
    <lineage>
        <taxon>Eukaryota</taxon>
        <taxon>Fungi</taxon>
        <taxon>Dikarya</taxon>
        <taxon>Ascomycota</taxon>
        <taxon>Pezizomycotina</taxon>
        <taxon>Sordariomycetes</taxon>
        <taxon>Hypocreomycetidae</taxon>
        <taxon>Hypocreales</taxon>
        <taxon>Nectriaceae</taxon>
        <taxon>Fusarium</taxon>
    </lineage>
</organism>
<feature type="chain" id="PRO_0000215928" description="Protein AF-9 homolog">
    <location>
        <begin position="1"/>
        <end position="268"/>
    </location>
</feature>
<feature type="domain" description="YEATS" evidence="3">
    <location>
        <begin position="10"/>
        <end position="168"/>
    </location>
</feature>
<feature type="region of interest" description="Disordered" evidence="4">
    <location>
        <begin position="173"/>
        <end position="194"/>
    </location>
</feature>
<feature type="coiled-coil region" evidence="2">
    <location>
        <begin position="220"/>
        <end position="268"/>
    </location>
</feature>
<dbReference type="EMBL" id="DS231666">
    <property type="protein sequence ID" value="ESU12874.1"/>
    <property type="molecule type" value="Genomic_DNA"/>
</dbReference>
<dbReference type="EMBL" id="HG970335">
    <property type="protein sequence ID" value="CEF85321.1"/>
    <property type="molecule type" value="Genomic_DNA"/>
</dbReference>
<dbReference type="RefSeq" id="XP_011326381.1">
    <property type="nucleotide sequence ID" value="XM_011328079.1"/>
</dbReference>
<dbReference type="SMR" id="Q4I7S1"/>
<dbReference type="FunCoup" id="Q4I7S1">
    <property type="interactions" value="714"/>
</dbReference>
<dbReference type="STRING" id="229533.Q4I7S1"/>
<dbReference type="GeneID" id="23553854"/>
<dbReference type="KEGG" id="fgr:FGSG_06737"/>
<dbReference type="VEuPathDB" id="FungiDB:FGRAMPH1_01G23049"/>
<dbReference type="eggNOG" id="KOG3149">
    <property type="taxonomic scope" value="Eukaryota"/>
</dbReference>
<dbReference type="HOGENOM" id="CLU_051385_2_0_1"/>
<dbReference type="InParanoid" id="Q4I7S1"/>
<dbReference type="OrthoDB" id="94393at110618"/>
<dbReference type="Proteomes" id="UP000070720">
    <property type="component" value="Chromosome 4"/>
</dbReference>
<dbReference type="GO" id="GO:0000785">
    <property type="term" value="C:chromatin"/>
    <property type="evidence" value="ECO:0007669"/>
    <property type="project" value="UniProtKB-ARBA"/>
</dbReference>
<dbReference type="GO" id="GO:0005737">
    <property type="term" value="C:cytoplasm"/>
    <property type="evidence" value="ECO:0007669"/>
    <property type="project" value="UniProtKB-SubCell"/>
</dbReference>
<dbReference type="GO" id="GO:0005634">
    <property type="term" value="C:nucleus"/>
    <property type="evidence" value="ECO:0007669"/>
    <property type="project" value="UniProtKB-SubCell"/>
</dbReference>
<dbReference type="GO" id="GO:0006325">
    <property type="term" value="P:chromatin organization"/>
    <property type="evidence" value="ECO:0007669"/>
    <property type="project" value="UniProtKB-KW"/>
</dbReference>
<dbReference type="GO" id="GO:0006281">
    <property type="term" value="P:DNA repair"/>
    <property type="evidence" value="ECO:0007669"/>
    <property type="project" value="UniProtKB-KW"/>
</dbReference>
<dbReference type="GO" id="GO:0006355">
    <property type="term" value="P:regulation of DNA-templated transcription"/>
    <property type="evidence" value="ECO:0007669"/>
    <property type="project" value="InterPro"/>
</dbReference>
<dbReference type="CDD" id="cd16908">
    <property type="entry name" value="YEATS_Yaf9_like"/>
    <property type="match status" value="1"/>
</dbReference>
<dbReference type="Gene3D" id="2.60.40.1970">
    <property type="entry name" value="YEATS domain"/>
    <property type="match status" value="1"/>
</dbReference>
<dbReference type="InterPro" id="IPR038704">
    <property type="entry name" value="YEAST_sf"/>
</dbReference>
<dbReference type="InterPro" id="IPR005033">
    <property type="entry name" value="YEATS"/>
</dbReference>
<dbReference type="InterPro" id="IPR055129">
    <property type="entry name" value="YEATS_dom"/>
</dbReference>
<dbReference type="PANTHER" id="PTHR47573">
    <property type="entry name" value="PROTEIN AF-9 HOMOLOG"/>
    <property type="match status" value="1"/>
</dbReference>
<dbReference type="PANTHER" id="PTHR47573:SF1">
    <property type="entry name" value="PROTEIN AF-9 HOMOLOG"/>
    <property type="match status" value="1"/>
</dbReference>
<dbReference type="Pfam" id="PF03366">
    <property type="entry name" value="YEATS"/>
    <property type="match status" value="1"/>
</dbReference>
<dbReference type="PROSITE" id="PS51037">
    <property type="entry name" value="YEATS"/>
    <property type="match status" value="1"/>
</dbReference>
<protein>
    <recommendedName>
        <fullName>Protein AF-9 homolog</fullName>
    </recommendedName>
</protein>
<comment type="function">
    <text evidence="1">Component of the SWR1 complex which mediates the ATP-dependent exchange of histone H2A for the H2A variant HZT1 leading to transcriptional regulation of selected genes by chromatin remodeling. Component of the NuA4 histone acetyltransferase complex which is involved in transcriptional activation of selected genes principally by acetylation of nucleosomal histones H4 and H2A. The NuA4 complex is also involved in DNA repair. Yaf9 may also be required for viability in conditions in which the structural integrity of the spindle is compromised (By similarity).</text>
</comment>
<comment type="subunit">
    <text evidence="1">Component of the SWR1 chromatin-remodeling complex and of the NuA4 histone acetyltransferase complex.</text>
</comment>
<comment type="subcellular location">
    <subcellularLocation>
        <location evidence="1">Cytoplasm</location>
    </subcellularLocation>
    <subcellularLocation>
        <location evidence="3">Nucleus</location>
    </subcellularLocation>
</comment>
<comment type="domain">
    <text evidence="1">The coiled-coil domain is required for assembly into the NuA4 complex.</text>
</comment>
<comment type="similarity">
    <text evidence="5">Belongs to the YAF9 family.</text>
</comment>
<accession>Q4I7S1</accession>
<accession>A0A0E0SFV8</accession>
<accession>V6RF48</accession>
<sequence length="268" mass="30242">MAPQNQLGKRVKLTQVRRPFIVGSTAKPFSDTNPRPAGIPDNHTHSWQVFVKGLDDTDITYWLRRVQFKLHESIPNYVRMVEGEPGKPFTVEETGWGEFDITIKLYYVNDSGEKPQTLYHYLRLHPYGRNEEEKQAMISSNGEICSWSYEEQLFNEPYEVFYNLLTQGAIPKGWKPSGGKGKGKTRAPPPFPTDNNEVWEHSAMIPAHNRPGQPFSLETEAAEIRKLAEAQGQAEDMAKKILAELKAKEEQLATLKGENQAAAAAAKS</sequence>